<keyword id="KW-0119">Carbohydrate metabolism</keyword>
<keyword id="KW-0963">Cytoplasm</keyword>
<keyword id="KW-0326">Glycosidase</keyword>
<keyword id="KW-0378">Hydrolase</keyword>
<keyword id="KW-1185">Reference proteome</keyword>
<feature type="chain" id="PRO_0000426851" description="Malto-oligosyltrehalose trehalohydrolase">
    <location>
        <begin position="1"/>
        <end position="580"/>
    </location>
</feature>
<feature type="region of interest" description="Disordered" evidence="4">
    <location>
        <begin position="56"/>
        <end position="88"/>
    </location>
</feature>
<feature type="compositionally biased region" description="Basic and acidic residues" evidence="4">
    <location>
        <begin position="60"/>
        <end position="69"/>
    </location>
</feature>
<feature type="active site" description="Nucleophile" evidence="3">
    <location>
        <position position="247"/>
    </location>
</feature>
<feature type="active site" description="Proton donor" evidence="3">
    <location>
        <position position="284"/>
    </location>
</feature>
<feature type="binding site" evidence="3">
    <location>
        <begin position="245"/>
        <end position="250"/>
    </location>
    <ligand>
        <name>substrate</name>
    </ligand>
</feature>
<feature type="binding site" evidence="3">
    <location>
        <begin position="309"/>
        <end position="313"/>
    </location>
    <ligand>
        <name>substrate</name>
    </ligand>
</feature>
<feature type="binding site" evidence="3">
    <location>
        <begin position="379"/>
        <end position="384"/>
    </location>
    <ligand>
        <name>substrate</name>
    </ligand>
</feature>
<feature type="site" description="Transition state stabilizer" evidence="3">
    <location>
        <position position="380"/>
    </location>
</feature>
<comment type="function">
    <text evidence="2">Is involved in the biosynthesis of trehalose but not in that of capsular glucan and glycogen.</text>
</comment>
<comment type="catalytic activity">
    <reaction evidence="3">
        <text>hydrolysis of (1-&gt;4)-alpha-D-glucosidic linkage in 4-alpha-D-[(1-&gt;4)-alpha-D-glucanosyl]n trehalose to yield trehalose and (1-&gt;4)-alpha-D-glucan.</text>
        <dbReference type="EC" id="3.2.1.141"/>
    </reaction>
</comment>
<comment type="pathway">
    <text>Glycan biosynthesis; trehalose biosynthesis.</text>
</comment>
<comment type="subcellular location">
    <subcellularLocation>
        <location evidence="1">Cytoplasm</location>
    </subcellularLocation>
</comment>
<comment type="similarity">
    <text evidence="5">Belongs to the glycosyl hydrolase 13 family.</text>
</comment>
<comment type="sequence caution" evidence="5">
    <conflict type="erroneous initiation">
        <sequence resource="EMBL-CDS" id="AAK45880"/>
    </conflict>
    <text>Extended N-terminus.</text>
</comment>
<protein>
    <recommendedName>
        <fullName>Malto-oligosyltrehalose trehalohydrolase</fullName>
        <shortName>MTHase</shortName>
        <ecNumber evidence="3">3.2.1.141</ecNumber>
    </recommendedName>
    <alternativeName>
        <fullName>4-alpha-D-((1-&gt;4)-alpha-D-glucano)trehalose trehalohydrolase</fullName>
    </alternativeName>
    <alternativeName>
        <fullName>Maltooligosyl trehalose trehalohydrolase</fullName>
    </alternativeName>
</protein>
<proteinExistence type="inferred from homology"/>
<dbReference type="EC" id="3.2.1.141" evidence="3"/>
<dbReference type="EMBL" id="AE000516">
    <property type="protein sequence ID" value="AAK45880.1"/>
    <property type="status" value="ALT_INIT"/>
    <property type="molecule type" value="Genomic_DNA"/>
</dbReference>
<dbReference type="PIR" id="G70763">
    <property type="entry name" value="G70763"/>
</dbReference>
<dbReference type="RefSeq" id="WP_003407788.1">
    <property type="nucleotide sequence ID" value="NZ_KK341227.1"/>
</dbReference>
<dbReference type="SMR" id="P9WQ22"/>
<dbReference type="CAZy" id="CBM48">
    <property type="family name" value="Carbohydrate-Binding Module Family 48"/>
</dbReference>
<dbReference type="CAZy" id="GH13">
    <property type="family name" value="Glycoside Hydrolase Family 13"/>
</dbReference>
<dbReference type="KEGG" id="mtc:MT1613"/>
<dbReference type="PATRIC" id="fig|83331.31.peg.1735"/>
<dbReference type="HOGENOM" id="CLU_020726_2_0_11"/>
<dbReference type="UniPathway" id="UPA00299"/>
<dbReference type="Proteomes" id="UP000001020">
    <property type="component" value="Chromosome"/>
</dbReference>
<dbReference type="GO" id="GO:0005737">
    <property type="term" value="C:cytoplasm"/>
    <property type="evidence" value="ECO:0007669"/>
    <property type="project" value="UniProtKB-SubCell"/>
</dbReference>
<dbReference type="GO" id="GO:0033942">
    <property type="term" value="F:4-alpha-D-(1-&gt;4)-alpha-D-glucanotrehalose trehalohydrolase activity"/>
    <property type="evidence" value="ECO:0007669"/>
    <property type="project" value="UniProtKB-EC"/>
</dbReference>
<dbReference type="GO" id="GO:0005992">
    <property type="term" value="P:trehalose biosynthetic process"/>
    <property type="evidence" value="ECO:0007669"/>
    <property type="project" value="UniProtKB-UniPathway"/>
</dbReference>
<dbReference type="CDD" id="cd11325">
    <property type="entry name" value="AmyAc_GTHase"/>
    <property type="match status" value="1"/>
</dbReference>
<dbReference type="CDD" id="cd02853">
    <property type="entry name" value="E_set_MTHase_like_N"/>
    <property type="match status" value="1"/>
</dbReference>
<dbReference type="FunFam" id="2.60.40.10:FF:002409">
    <property type="entry name" value="Malto-oligosyltrehalose trehalohydrolase"/>
    <property type="match status" value="1"/>
</dbReference>
<dbReference type="Gene3D" id="1.10.10.760">
    <property type="entry name" value="E-set domains of sugar-utilizing enzymes"/>
    <property type="match status" value="1"/>
</dbReference>
<dbReference type="Gene3D" id="3.20.20.80">
    <property type="entry name" value="Glycosidases"/>
    <property type="match status" value="1"/>
</dbReference>
<dbReference type="Gene3D" id="2.60.40.10">
    <property type="entry name" value="Immunoglobulins"/>
    <property type="match status" value="1"/>
</dbReference>
<dbReference type="InterPro" id="IPR022567">
    <property type="entry name" value="DUF3459"/>
</dbReference>
<dbReference type="InterPro" id="IPR006047">
    <property type="entry name" value="Glyco_hydro_13_cat_dom"/>
</dbReference>
<dbReference type="InterPro" id="IPR017853">
    <property type="entry name" value="Glycoside_hydrolase_SF"/>
</dbReference>
<dbReference type="InterPro" id="IPR013783">
    <property type="entry name" value="Ig-like_fold"/>
</dbReference>
<dbReference type="InterPro" id="IPR014756">
    <property type="entry name" value="Ig_E-set"/>
</dbReference>
<dbReference type="InterPro" id="IPR012768">
    <property type="entry name" value="Trehalose_TreZ"/>
</dbReference>
<dbReference type="InterPro" id="IPR044901">
    <property type="entry name" value="Trehalose_TreZ_E-set_sf"/>
</dbReference>
<dbReference type="NCBIfam" id="TIGR02402">
    <property type="entry name" value="trehalose_TreZ"/>
    <property type="match status" value="1"/>
</dbReference>
<dbReference type="PANTHER" id="PTHR43651">
    <property type="entry name" value="1,4-ALPHA-GLUCAN-BRANCHING ENZYME"/>
    <property type="match status" value="1"/>
</dbReference>
<dbReference type="PANTHER" id="PTHR43651:SF11">
    <property type="entry name" value="MALTO-OLIGOSYLTREHALOSE TREHALOHYDROLASE"/>
    <property type="match status" value="1"/>
</dbReference>
<dbReference type="Pfam" id="PF00128">
    <property type="entry name" value="Alpha-amylase"/>
    <property type="match status" value="1"/>
</dbReference>
<dbReference type="Pfam" id="PF11941">
    <property type="entry name" value="DUF3459"/>
    <property type="match status" value="1"/>
</dbReference>
<dbReference type="PIRSF" id="PIRSF006337">
    <property type="entry name" value="Trehalose_TreZ"/>
    <property type="match status" value="1"/>
</dbReference>
<dbReference type="SMART" id="SM00642">
    <property type="entry name" value="Aamy"/>
    <property type="match status" value="1"/>
</dbReference>
<dbReference type="SUPFAM" id="SSF51445">
    <property type="entry name" value="(Trans)glycosidases"/>
    <property type="match status" value="1"/>
</dbReference>
<dbReference type="SUPFAM" id="SSF81296">
    <property type="entry name" value="E set domains"/>
    <property type="match status" value="1"/>
</dbReference>
<name>TREZ_MYCTO</name>
<evidence type="ECO:0000250" key="1"/>
<evidence type="ECO:0000250" key="2">
    <source>
        <dbReference type="UniProtKB" id="P9WQ23"/>
    </source>
</evidence>
<evidence type="ECO:0000250" key="3">
    <source>
        <dbReference type="UniProtKB" id="Q55088"/>
    </source>
</evidence>
<evidence type="ECO:0000256" key="4">
    <source>
        <dbReference type="SAM" id="MobiDB-lite"/>
    </source>
</evidence>
<evidence type="ECO:0000305" key="5"/>
<reference key="1">
    <citation type="journal article" date="2002" name="J. Bacteriol.">
        <title>Whole-genome comparison of Mycobacterium tuberculosis clinical and laboratory strains.</title>
        <authorList>
            <person name="Fleischmann R.D."/>
            <person name="Alland D."/>
            <person name="Eisen J.A."/>
            <person name="Carpenter L."/>
            <person name="White O."/>
            <person name="Peterson J.D."/>
            <person name="DeBoy R.T."/>
            <person name="Dodson R.J."/>
            <person name="Gwinn M.L."/>
            <person name="Haft D.H."/>
            <person name="Hickey E.K."/>
            <person name="Kolonay J.F."/>
            <person name="Nelson W.C."/>
            <person name="Umayam L.A."/>
            <person name="Ermolaeva M.D."/>
            <person name="Salzberg S.L."/>
            <person name="Delcher A."/>
            <person name="Utterback T.R."/>
            <person name="Weidman J.F."/>
            <person name="Khouri H.M."/>
            <person name="Gill J."/>
            <person name="Mikula A."/>
            <person name="Bishai W."/>
            <person name="Jacobs W.R. Jr."/>
            <person name="Venter J.C."/>
            <person name="Fraser C.M."/>
        </authorList>
    </citation>
    <scope>NUCLEOTIDE SEQUENCE [LARGE SCALE GENOMIC DNA]</scope>
    <source>
        <strain>CDC 1551 / Oshkosh</strain>
    </source>
</reference>
<accession>P9WQ22</accession>
<accession>L0T712</accession>
<accession>Q10769</accession>
<gene>
    <name type="primary">treZ</name>
    <name type="ordered locus">MT1613</name>
</gene>
<sequence>MPEFRVWAPKPALVRLDVNGAVHAMTRSADGWWHTTVAAPADARYGYLLDDDPTVLPDPRSARQPDGVHARSQRWEPPGQFGAARTDTGWPGRSVEGAVIYELHIGTFTTAGTFDAAIEKLDYLVDLGIDFVELMPVNSFAGTRGWGYDGVLWYSVHEPYGGPDGLVRFIDACHARRLGVLIDAVFNHLGPSGNYLPRFGPYLSSASNPWGDGINIAGADSDEVRHYIIDCALRWMRDFHADGLRLDAVHALVDTTAVHVLEELANATRWLSGQLGRPLSLIAETDRNDPRLITRPSHGGYGITAQWNDDIHHAIHTAVSGERQGYYADFGSLATLAYTLRNGYFHAGTYSSFRRRRHGRALDTSAIPATRLLAYTCTHDQVGNRALGDRPSQYLTGGQLAIKAALTLGSPYTAMLFMGEEWGASSPFQFFCSHPEPELAHSTVAGRKEEFAEHGWAADDIPDPQDPQTFQRCKLNWAEAGSGEHARLHRFYRDLIALRHNEADLADPWLDHLMVDYDEQQRWVVMRRGQLMIACNLGAEPTCVPVSGELVLAWESPIIGDNSTELAAYSLAILRAAEPA</sequence>
<organism>
    <name type="scientific">Mycobacterium tuberculosis (strain CDC 1551 / Oshkosh)</name>
    <dbReference type="NCBI Taxonomy" id="83331"/>
    <lineage>
        <taxon>Bacteria</taxon>
        <taxon>Bacillati</taxon>
        <taxon>Actinomycetota</taxon>
        <taxon>Actinomycetes</taxon>
        <taxon>Mycobacteriales</taxon>
        <taxon>Mycobacteriaceae</taxon>
        <taxon>Mycobacterium</taxon>
        <taxon>Mycobacterium tuberculosis complex</taxon>
    </lineage>
</organism>